<comment type="function">
    <text evidence="1">Plays an important role in the formation of lipid droplets (LD) which are storage organelles at the center of lipid and energy homeostasis (By similarity). In association with BSCL2/seipin, defines the sites of LD formation in the endoplasmic reticulum (By similarity).</text>
</comment>
<comment type="subunit">
    <text evidence="1">Interacts with BSCL2/seipin to form an oligomeric complex.</text>
</comment>
<comment type="subcellular location">
    <subcellularLocation>
        <location evidence="1">Endoplasmic reticulum membrane</location>
        <topology evidence="2">Multi-pass membrane protein</topology>
    </subcellularLocation>
    <subcellularLocation>
        <location evidence="1">Lipid droplet</location>
    </subcellularLocation>
    <text evidence="1">Co-localizes with BSCL2/seipin in the ER, upon LD formation dissociates from BSCL2/seipin and relocalizes to LD surfaces during LD maturation.</text>
</comment>
<comment type="similarity">
    <text evidence="4">Belongs to the LDAF1 family.</text>
</comment>
<keyword id="KW-0256">Endoplasmic reticulum</keyword>
<keyword id="KW-0551">Lipid droplet</keyword>
<keyword id="KW-0472">Membrane</keyword>
<keyword id="KW-1185">Reference proteome</keyword>
<keyword id="KW-0812">Transmembrane</keyword>
<keyword id="KW-1133">Transmembrane helix</keyword>
<name>LDAF1_RAT</name>
<gene>
    <name evidence="5" type="primary">Ldaf1</name>
    <name type="synonym">Tmem159</name>
</gene>
<protein>
    <recommendedName>
        <fullName evidence="1">Lipid droplet assembly factor 1</fullName>
    </recommendedName>
    <alternativeName>
        <fullName evidence="3">Promethin</fullName>
    </alternativeName>
    <alternativeName>
        <fullName>Transmembrane protein 159</fullName>
    </alternativeName>
</protein>
<evidence type="ECO:0000250" key="1">
    <source>
        <dbReference type="UniProtKB" id="Q96B96"/>
    </source>
</evidence>
<evidence type="ECO:0000255" key="2"/>
<evidence type="ECO:0000303" key="3">
    <source>
    </source>
</evidence>
<evidence type="ECO:0000305" key="4"/>
<evidence type="ECO:0000312" key="5">
    <source>
        <dbReference type="RGD" id="727895"/>
    </source>
</evidence>
<accession>Q6UK00</accession>
<accession>Q6DGG2</accession>
<reference key="1">
    <citation type="journal article" date="2004" name="Biochimie">
        <title>Identification of promethin and PGLP as two novel up-regulated genes in PPARgamma1-induced adipogenic mouse liver.</title>
        <authorList>
            <person name="Yu S."/>
            <person name="Viswakarma N."/>
            <person name="Batra S.K."/>
            <person name="Sambasiva Rao M."/>
            <person name="Reddy J.K."/>
        </authorList>
    </citation>
    <scope>NUCLEOTIDE SEQUENCE [MRNA]</scope>
    <source>
        <strain>BDIX</strain>
    </source>
</reference>
<reference key="2">
    <citation type="journal article" date="2004" name="Genome Res.">
        <title>The status, quality, and expansion of the NIH full-length cDNA project: the Mammalian Gene Collection (MGC).</title>
        <authorList>
            <consortium name="The MGC Project Team"/>
        </authorList>
    </citation>
    <scope>NUCLEOTIDE SEQUENCE [LARGE SCALE MRNA]</scope>
    <source>
        <tissue>Kidney</tissue>
    </source>
</reference>
<sequence>MAEEEPSSVSRDLQELQRKLGLLLESFQNNSKVVAFMKSPVGRFLDRHPFLVLTVLMFVTMSAIPVGFFLLIVVLTSLGALMGAILLEGLVISVCGLSLLCILCGLGFVSLALSGITMMSYVVVSCLMSYWFSPSRPPTQQHANIDSQLAMKFTESEKLGL</sequence>
<feature type="chain" id="PRO_0000279537" description="Lipid droplet assembly factor 1">
    <location>
        <begin position="1"/>
        <end position="161"/>
    </location>
</feature>
<feature type="topological domain" description="Cytoplasmic" evidence="1">
    <location>
        <begin position="1"/>
        <end position="43"/>
    </location>
</feature>
<feature type="transmembrane region" description="Helical" evidence="4">
    <location>
        <begin position="44"/>
        <end position="61"/>
    </location>
</feature>
<feature type="topological domain" description="Lumenal" evidence="1">
    <location>
        <begin position="62"/>
        <end position="67"/>
    </location>
</feature>
<feature type="transmembrane region" description="Helical" evidence="4">
    <location>
        <begin position="68"/>
        <end position="87"/>
    </location>
</feature>
<feature type="topological domain" description="Cytoplasmic" evidence="1">
    <location>
        <begin position="88"/>
        <end position="93"/>
    </location>
</feature>
<feature type="transmembrane region" description="Helical" evidence="4">
    <location>
        <begin position="94"/>
        <end position="110"/>
    </location>
</feature>
<feature type="topological domain" description="Lumenal" evidence="1">
    <location>
        <begin position="111"/>
        <end position="116"/>
    </location>
</feature>
<feature type="transmembrane region" description="Helical" evidence="4">
    <location>
        <begin position="117"/>
        <end position="133"/>
    </location>
</feature>
<feature type="topological domain" description="Cytoplasmic" evidence="1">
    <location>
        <begin position="134"/>
        <end position="161"/>
    </location>
</feature>
<feature type="sequence conflict" description="In Ref. 2; AAH76384." evidence="4" ref="2">
    <original>S</original>
    <variation>P</variation>
    <location>
        <position position="7"/>
    </location>
</feature>
<dbReference type="EMBL" id="AY368496">
    <property type="protein sequence ID" value="AAQ74624.1"/>
    <property type="molecule type" value="mRNA"/>
</dbReference>
<dbReference type="EMBL" id="BC076384">
    <property type="protein sequence ID" value="AAH76384.1"/>
    <property type="molecule type" value="mRNA"/>
</dbReference>
<dbReference type="RefSeq" id="NP_919335.2">
    <property type="nucleotide sequence ID" value="NM_194354.2"/>
</dbReference>
<dbReference type="RefSeq" id="XP_006230200.1">
    <property type="nucleotide sequence ID" value="XM_006230138.3"/>
</dbReference>
<dbReference type="RefSeq" id="XP_017445000.1">
    <property type="nucleotide sequence ID" value="XM_017589511.1"/>
</dbReference>
<dbReference type="RefSeq" id="XP_017445001.1">
    <property type="nucleotide sequence ID" value="XM_017589512.1"/>
</dbReference>
<dbReference type="SMR" id="Q6UK00"/>
<dbReference type="FunCoup" id="Q6UK00">
    <property type="interactions" value="294"/>
</dbReference>
<dbReference type="STRING" id="10116.ENSRNOP00000065085"/>
<dbReference type="PhosphoSitePlus" id="Q6UK00"/>
<dbReference type="PaxDb" id="10116-ENSRNOP00000065085"/>
<dbReference type="GeneID" id="378467"/>
<dbReference type="KEGG" id="rno:378467"/>
<dbReference type="AGR" id="RGD:727895"/>
<dbReference type="CTD" id="57146"/>
<dbReference type="RGD" id="727895">
    <property type="gene designation" value="Ldaf1"/>
</dbReference>
<dbReference type="eggNOG" id="ENOG502S3TB">
    <property type="taxonomic scope" value="Eukaryota"/>
</dbReference>
<dbReference type="InParanoid" id="Q6UK00"/>
<dbReference type="PhylomeDB" id="Q6UK00"/>
<dbReference type="PRO" id="PR:Q6UK00"/>
<dbReference type="Proteomes" id="UP000002494">
    <property type="component" value="Unplaced"/>
</dbReference>
<dbReference type="GO" id="GO:0005789">
    <property type="term" value="C:endoplasmic reticulum membrane"/>
    <property type="evidence" value="ECO:0000250"/>
    <property type="project" value="UniProtKB"/>
</dbReference>
<dbReference type="GO" id="GO:0005811">
    <property type="term" value="C:lipid droplet"/>
    <property type="evidence" value="ECO:0000250"/>
    <property type="project" value="UniProtKB"/>
</dbReference>
<dbReference type="GO" id="GO:0140042">
    <property type="term" value="P:lipid droplet formation"/>
    <property type="evidence" value="ECO:0000250"/>
    <property type="project" value="UniProtKB"/>
</dbReference>
<dbReference type="InterPro" id="IPR029709">
    <property type="entry name" value="LDAF1"/>
</dbReference>
<dbReference type="PANTHER" id="PTHR14275:SF0">
    <property type="entry name" value="LIPID DROPLET ASSEMBLY FACTOR 1"/>
    <property type="match status" value="1"/>
</dbReference>
<dbReference type="PANTHER" id="PTHR14275">
    <property type="entry name" value="PROMETHIN"/>
    <property type="match status" value="1"/>
</dbReference>
<dbReference type="Pfam" id="PF16015">
    <property type="entry name" value="Promethin"/>
    <property type="match status" value="1"/>
</dbReference>
<organism>
    <name type="scientific">Rattus norvegicus</name>
    <name type="common">Rat</name>
    <dbReference type="NCBI Taxonomy" id="10116"/>
    <lineage>
        <taxon>Eukaryota</taxon>
        <taxon>Metazoa</taxon>
        <taxon>Chordata</taxon>
        <taxon>Craniata</taxon>
        <taxon>Vertebrata</taxon>
        <taxon>Euteleostomi</taxon>
        <taxon>Mammalia</taxon>
        <taxon>Eutheria</taxon>
        <taxon>Euarchontoglires</taxon>
        <taxon>Glires</taxon>
        <taxon>Rodentia</taxon>
        <taxon>Myomorpha</taxon>
        <taxon>Muroidea</taxon>
        <taxon>Muridae</taxon>
        <taxon>Murinae</taxon>
        <taxon>Rattus</taxon>
    </lineage>
</organism>
<proteinExistence type="evidence at transcript level"/>